<evidence type="ECO:0000255" key="1">
    <source>
        <dbReference type="HAMAP-Rule" id="MF_04077"/>
    </source>
</evidence>
<evidence type="ECO:0000256" key="2">
    <source>
        <dbReference type="SAM" id="MobiDB-lite"/>
    </source>
</evidence>
<proteinExistence type="inferred from homology"/>
<sequence>MAGRRGDSDEDLLKAVRLIKSLYQSNPPPSPEGTRQARRNRRRRWRERQRQIRRCSEWILDTYLGRSVDPVQLQLPPLERLTLDSSEDCGTSGTQGVGSPQVLVESPAVLESGAKE</sequence>
<name>REV_HV1RH</name>
<protein>
    <recommendedName>
        <fullName evidence="1">Protein Rev</fullName>
    </recommendedName>
    <alternativeName>
        <fullName evidence="1">ART/TRS</fullName>
    </alternativeName>
    <alternativeName>
        <fullName evidence="1">Anti-repression transactivator</fullName>
    </alternativeName>
    <alternativeName>
        <fullName evidence="1">Regulator of expression of viral proteins</fullName>
    </alternativeName>
</protein>
<keyword id="KW-0014">AIDS</keyword>
<keyword id="KW-1035">Host cytoplasm</keyword>
<keyword id="KW-1048">Host nucleus</keyword>
<keyword id="KW-0945">Host-virus interaction</keyword>
<keyword id="KW-0488">Methylation</keyword>
<keyword id="KW-0509">mRNA transport</keyword>
<keyword id="KW-0597">Phosphoprotein</keyword>
<keyword id="KW-1185">Reference proteome</keyword>
<keyword id="KW-0694">RNA-binding</keyword>
<keyword id="KW-0813">Transport</keyword>
<gene>
    <name evidence="1" type="primary">rev</name>
</gene>
<reference key="1">
    <citation type="journal article" date="1986" name="Cell">
        <title>Identification and characterization of conserved and variable regions in the envelope gene of HTLV-III/LAV, the retrovirus of AIDS.</title>
        <authorList>
            <person name="Starcich B.R."/>
            <person name="Hahn B.H."/>
            <person name="Shaw G.M."/>
            <person name="McNeely P.D."/>
            <person name="Modrow S."/>
            <person name="Wolf H."/>
            <person name="Parks E.S."/>
            <person name="Parks W.P."/>
            <person name="Josephs S.F."/>
            <person name="Gallo R.C."/>
            <person name="Wong-Staal F."/>
        </authorList>
    </citation>
    <scope>NUCLEOTIDE SEQUENCE [GENOMIC RNA]</scope>
</reference>
<reference key="2">
    <citation type="journal article" date="1999" name="Arch. Biochem. Biophys.">
        <title>The ins and outs of HIV Rev.</title>
        <authorList>
            <person name="Hope T.J."/>
        </authorList>
    </citation>
    <scope>REVIEW</scope>
</reference>
<comment type="function">
    <text evidence="1">Escorts unspliced or incompletely spliced viral pre-mRNAs (late transcripts) out of the nucleus of infected cells. These pre-mRNAs carry a recognition sequence called Rev responsive element (RRE) located in the env gene, that is not present in fully spliced viral mRNAs (early transcripts). This function is essential since most viral proteins are translated from unspliced or partially spliced pre-mRNAs which cannot exit the nucleus by the pathway used by fully processed cellular mRNAs. Rev itself is translated from a fully spliced mRNA that readily exits the nucleus. Rev's nuclear localization signal (NLS) binds directly to KPNB1/Importin beta-1 without previous binding to KPNA1/Importin alpha-1. KPNB1 binds to the GDP bound form of RAN (Ran-GDP) and targets Rev to the nucleus. In the nucleus, the conversion from Ran-GDP to Ran-GTP dissociates Rev from KPNB1 and allows Rev's binding to the RRE in viral pre-mRNAs. Rev multimerization on the RRE via cooperative assembly exposes its nuclear export signal (NES) to the surface. Rev can then form a complex with XPO1/CRM1 and Ran-GTP, leading to nuclear export of the complex. Conversion from Ran-GTP to Ran-GDP mediates dissociation of the Rev/RRE/XPO1/RAN complex, so that Rev can return to the nucleus for a subsequent round of export. Beside KPNB1, also seems to interact with TNPO1/Transportin-1, RANBP5/IPO5 and IPO7/RANBP7 for nuclear import. The nucleoporin-like HRB/RIP is an essential cofactor that probably indirectly interacts with Rev to release HIV RNAs from the perinuclear region to the cytoplasm.</text>
</comment>
<comment type="subunit">
    <text evidence="1">Homomultimer; when bound to the RRE. Multimeric assembly is essential for activity and may involve XPO1. Binds to human KPNB1, XPO1, TNPO1, RANBP5 and IPO7. Interacts with the viral Integrase. Interacts with human KHDRBS1. Interacts with human NAP1; this interaction decreases Rev multimerization and stimulates its activity. Interacts with human DEAD-box helicases DDX3 and DDX24; these interactions may serve for viral RNA export to the cytoplasm and packaging, respectively. Interacts with human PSIP1; this interaction may inhibit HIV-1 DNA integration by promoting dissociation of the Integrase-LEDGF/p75 complex.</text>
</comment>
<comment type="subcellular location">
    <subcellularLocation>
        <location evidence="1">Host nucleus</location>
        <location evidence="1">Host nucleolus</location>
    </subcellularLocation>
    <subcellularLocation>
        <location evidence="1">Host cytoplasm</location>
    </subcellularLocation>
    <text evidence="1">The presence of both nuclear import and nuclear export signals leads to continuous shuttling between the nucleus and cytoplasm.</text>
</comment>
<comment type="domain">
    <text evidence="1">The RNA-binding motif binds to the RRE, a 240 bp stem-and-loop structure present in incompletely spliced viral pre-mRNAs. This region also contains the NLS which mediates nuclear localization via KPNB1 binding and, when the N-terminal sequence is present, nucleolar targeting. These overlapping functions prevent Rev bound to RRE from undesirable return to the nucleus. When Rev binds the RRE, the NLS becomes masked while the NES remains accessible. The leucine-rich NES mediates binding to human XPO1.</text>
</comment>
<comment type="PTM">
    <text evidence="1">Asymmetrically arginine dimethylated at one site by host PRMT6. Methylation impairs the RNA-binding activity and export of viral RNA from the nucleus to the cytoplasm.</text>
</comment>
<comment type="PTM">
    <text evidence="1">Phosphorylated by protein kinase CK2. Presence of, and maybe binding to the N-terminus of the regulatory beta subunit of CK2 is necessary for CK2-mediated Rev's phosphorylation.</text>
</comment>
<comment type="miscellaneous">
    <text evidence="1">HIV-1 lineages are divided in three main groups, M (for Major), O (for Outlier), and N (for New, or Non-M, Non-O). The vast majority of strains found worldwide belong to the group M. Group O seems to be endemic to and largely confined to Cameroon and neighboring countries in West Central Africa, where these viruses represent a small minority of HIV-1 strains. The group N is represented by a limited number of isolates from Cameroonian persons. The group M is further subdivided in 9 clades or subtypes (A to D, F to H, J and K).</text>
</comment>
<comment type="similarity">
    <text evidence="1">Belongs to the HIV-1 REV protein family.</text>
</comment>
<organism>
    <name type="scientific">Human immunodeficiency virus type 1 group M subtype B (isolate RF/HAT3)</name>
    <name type="common">HIV-1</name>
    <dbReference type="NCBI Taxonomy" id="11701"/>
    <lineage>
        <taxon>Viruses</taxon>
        <taxon>Riboviria</taxon>
        <taxon>Pararnavirae</taxon>
        <taxon>Artverviricota</taxon>
        <taxon>Revtraviricetes</taxon>
        <taxon>Ortervirales</taxon>
        <taxon>Retroviridae</taxon>
        <taxon>Orthoretrovirinae</taxon>
        <taxon>Lentivirus</taxon>
        <taxon>Human immunodeficiency virus type 1</taxon>
    </lineage>
</organism>
<accession>P05870</accession>
<feature type="chain" id="PRO_0000085275" description="Protein Rev">
    <location>
        <begin position="1"/>
        <end position="116"/>
    </location>
</feature>
<feature type="region of interest" description="Homomultimerization" evidence="1">
    <location>
        <begin position="18"/>
        <end position="26"/>
    </location>
</feature>
<feature type="region of interest" description="Disordered" evidence="2">
    <location>
        <begin position="20"/>
        <end position="46"/>
    </location>
</feature>
<feature type="region of interest" description="Disordered" evidence="2">
    <location>
        <begin position="84"/>
        <end position="116"/>
    </location>
</feature>
<feature type="short sequence motif" description="Nuclear localization signal and RNA-binding (RRE)" evidence="1">
    <location>
        <begin position="34"/>
        <end position="50"/>
    </location>
</feature>
<feature type="short sequence motif" description="Nuclear export signal and binding to XPO1" evidence="1">
    <location>
        <begin position="73"/>
        <end position="84"/>
    </location>
</feature>
<feature type="compositionally biased region" description="Basic residues" evidence="2">
    <location>
        <begin position="36"/>
        <end position="46"/>
    </location>
</feature>
<feature type="compositionally biased region" description="Polar residues" evidence="2">
    <location>
        <begin position="88"/>
        <end position="98"/>
    </location>
</feature>
<feature type="modified residue" description="Phosphoserine; by host CK2" evidence="1">
    <location>
        <position position="8"/>
    </location>
</feature>
<feature type="modified residue" description="Phosphoserine; by host" evidence="1">
    <location>
        <position position="92"/>
    </location>
</feature>
<feature type="modified residue" description="Phosphoserine; by host" evidence="1">
    <location>
        <position position="99"/>
    </location>
</feature>
<dbReference type="EMBL" id="M17451">
    <property type="protein sequence ID" value="AAA45051.1"/>
    <property type="molecule type" value="Genomic_RNA"/>
</dbReference>
<dbReference type="Proteomes" id="UP000007699">
    <property type="component" value="Segment"/>
</dbReference>
<dbReference type="GO" id="GO:0030430">
    <property type="term" value="C:host cell cytoplasm"/>
    <property type="evidence" value="ECO:0007669"/>
    <property type="project" value="UniProtKB-SubCell"/>
</dbReference>
<dbReference type="GO" id="GO:0044196">
    <property type="term" value="C:host cell nucleolus"/>
    <property type="evidence" value="ECO:0007669"/>
    <property type="project" value="UniProtKB-SubCell"/>
</dbReference>
<dbReference type="GO" id="GO:0003700">
    <property type="term" value="F:DNA-binding transcription factor activity"/>
    <property type="evidence" value="ECO:0007669"/>
    <property type="project" value="UniProtKB-UniRule"/>
</dbReference>
<dbReference type="GO" id="GO:0003723">
    <property type="term" value="F:RNA binding"/>
    <property type="evidence" value="ECO:0007669"/>
    <property type="project" value="UniProtKB-UniRule"/>
</dbReference>
<dbReference type="GO" id="GO:0051028">
    <property type="term" value="P:mRNA transport"/>
    <property type="evidence" value="ECO:0007669"/>
    <property type="project" value="UniProtKB-UniRule"/>
</dbReference>
<dbReference type="GO" id="GO:0016032">
    <property type="term" value="P:viral process"/>
    <property type="evidence" value="ECO:0007669"/>
    <property type="project" value="UniProtKB-UniRule"/>
</dbReference>
<dbReference type="Gene3D" id="6.10.140.630">
    <property type="match status" value="1"/>
</dbReference>
<dbReference type="HAMAP" id="MF_04077">
    <property type="entry name" value="REV_HIV1"/>
    <property type="match status" value="1"/>
</dbReference>
<dbReference type="InterPro" id="IPR000625">
    <property type="entry name" value="REV_protein"/>
</dbReference>
<dbReference type="Pfam" id="PF00424">
    <property type="entry name" value="REV"/>
    <property type="match status" value="1"/>
</dbReference>
<organismHost>
    <name type="scientific">Homo sapiens</name>
    <name type="common">Human</name>
    <dbReference type="NCBI Taxonomy" id="9606"/>
</organismHost>